<feature type="chain" id="PRO_1000083319" description="Septation ring formation regulator EzrA">
    <location>
        <begin position="1"/>
        <end position="564"/>
    </location>
</feature>
<feature type="topological domain" description="Extracellular" evidence="1">
    <location>
        <begin position="1"/>
        <end position="4"/>
    </location>
</feature>
<feature type="transmembrane region" description="Helical" evidence="1">
    <location>
        <begin position="5"/>
        <end position="23"/>
    </location>
</feature>
<feature type="topological domain" description="Cytoplasmic" evidence="1">
    <location>
        <begin position="24"/>
        <end position="564"/>
    </location>
</feature>
<feature type="coiled-coil region" evidence="1">
    <location>
        <begin position="99"/>
        <end position="138"/>
    </location>
</feature>
<feature type="coiled-coil region" evidence="1">
    <location>
        <begin position="190"/>
        <end position="223"/>
    </location>
</feature>
<feature type="coiled-coil region" evidence="1">
    <location>
        <begin position="271"/>
        <end position="300"/>
    </location>
</feature>
<feature type="coiled-coil region" evidence="1">
    <location>
        <begin position="350"/>
        <end position="435"/>
    </location>
</feature>
<feature type="coiled-coil region" evidence="1">
    <location>
        <begin position="471"/>
        <end position="550"/>
    </location>
</feature>
<comment type="function">
    <text evidence="1">Negative regulator of FtsZ ring formation; modulates the frequency and position of FtsZ ring formation. Inhibits FtsZ ring formation at polar sites. Interacts either with FtsZ or with one of its binding partners to promote depolymerization.</text>
</comment>
<comment type="subcellular location">
    <subcellularLocation>
        <location evidence="1">Cell membrane</location>
        <topology evidence="1">Single-pass membrane protein</topology>
    </subcellularLocation>
    <text evidence="1">Colocalized with FtsZ to the nascent septal site.</text>
</comment>
<comment type="similarity">
    <text evidence="1">Belongs to the EzrA family.</text>
</comment>
<reference key="1">
    <citation type="submission" date="2007-06" db="EMBL/GenBank/DDBJ databases">
        <title>Complete sequence of chromosome of Staphylococcus aureus subsp. aureus JH1.</title>
        <authorList>
            <consortium name="US DOE Joint Genome Institute"/>
            <person name="Copeland A."/>
            <person name="Lucas S."/>
            <person name="Lapidus A."/>
            <person name="Barry K."/>
            <person name="Detter J.C."/>
            <person name="Glavina del Rio T."/>
            <person name="Hammon N."/>
            <person name="Israni S."/>
            <person name="Dalin E."/>
            <person name="Tice H."/>
            <person name="Pitluck S."/>
            <person name="Chain P."/>
            <person name="Malfatti S."/>
            <person name="Shin M."/>
            <person name="Vergez L."/>
            <person name="Schmutz J."/>
            <person name="Larimer F."/>
            <person name="Land M."/>
            <person name="Hauser L."/>
            <person name="Kyrpides N."/>
            <person name="Ivanova N."/>
            <person name="Tomasz A."/>
            <person name="Richardson P."/>
        </authorList>
    </citation>
    <scope>NUCLEOTIDE SEQUENCE [LARGE SCALE GENOMIC DNA]</scope>
    <source>
        <strain>JH1</strain>
    </source>
</reference>
<keyword id="KW-0131">Cell cycle</keyword>
<keyword id="KW-0132">Cell division</keyword>
<keyword id="KW-1003">Cell membrane</keyword>
<keyword id="KW-0175">Coiled coil</keyword>
<keyword id="KW-0472">Membrane</keyword>
<keyword id="KW-0717">Septation</keyword>
<keyword id="KW-0812">Transmembrane</keyword>
<keyword id="KW-1133">Transmembrane helix</keyword>
<dbReference type="EMBL" id="CP000736">
    <property type="protein sequence ID" value="ABR52652.1"/>
    <property type="molecule type" value="Genomic_DNA"/>
</dbReference>
<dbReference type="SMR" id="A6U2I4"/>
<dbReference type="KEGG" id="sah:SaurJH1_1808"/>
<dbReference type="HOGENOM" id="CLU_034079_1_0_9"/>
<dbReference type="GO" id="GO:0005886">
    <property type="term" value="C:plasma membrane"/>
    <property type="evidence" value="ECO:0007669"/>
    <property type="project" value="UniProtKB-SubCell"/>
</dbReference>
<dbReference type="GO" id="GO:0005940">
    <property type="term" value="C:septin ring"/>
    <property type="evidence" value="ECO:0007669"/>
    <property type="project" value="InterPro"/>
</dbReference>
<dbReference type="GO" id="GO:0000917">
    <property type="term" value="P:division septum assembly"/>
    <property type="evidence" value="ECO:0007669"/>
    <property type="project" value="UniProtKB-KW"/>
</dbReference>
<dbReference type="GO" id="GO:0000921">
    <property type="term" value="P:septin ring assembly"/>
    <property type="evidence" value="ECO:0007669"/>
    <property type="project" value="InterPro"/>
</dbReference>
<dbReference type="HAMAP" id="MF_00728">
    <property type="entry name" value="EzrA"/>
    <property type="match status" value="1"/>
</dbReference>
<dbReference type="InterPro" id="IPR010379">
    <property type="entry name" value="EzrA"/>
</dbReference>
<dbReference type="NCBIfam" id="NF003412">
    <property type="entry name" value="PRK04778.1-6"/>
    <property type="match status" value="1"/>
</dbReference>
<dbReference type="Pfam" id="PF06160">
    <property type="entry name" value="EzrA"/>
    <property type="match status" value="1"/>
</dbReference>
<protein>
    <recommendedName>
        <fullName evidence="1">Septation ring formation regulator EzrA</fullName>
    </recommendedName>
</protein>
<name>EZRA_STAA2</name>
<organism>
    <name type="scientific">Staphylococcus aureus (strain JH1)</name>
    <dbReference type="NCBI Taxonomy" id="359787"/>
    <lineage>
        <taxon>Bacteria</taxon>
        <taxon>Bacillati</taxon>
        <taxon>Bacillota</taxon>
        <taxon>Bacilli</taxon>
        <taxon>Bacillales</taxon>
        <taxon>Staphylococcaceae</taxon>
        <taxon>Staphylococcus</taxon>
    </lineage>
</organism>
<evidence type="ECO:0000255" key="1">
    <source>
        <dbReference type="HAMAP-Rule" id="MF_00728"/>
    </source>
</evidence>
<proteinExistence type="inferred from homology"/>
<sequence length="564" mass="66200">MVLYIILAIIVIILIAVGVLFYLRSNKRQIIEKAIERKNEIETLPFDQNLAQLSKLNLKGETKTKYDAMKKDNVESTNKYLAPVEEKIHNAEALLDKFSFNASQSEIDDANELMDSYEQSYQQQLEDVNEIIALYKDNDELYDKCKVDYREMKRDVLANRHQFGEAASLLETEIEKFEPRLEQYEVLKADGNYVQAHNHIAALNEQMKQLRSYMEEIPELIRETQKELPGQFQDLKYGCRDLKVEGYDLDHVKVDSTLQSLKTELSFVEPLISRLELEEANDKLANINDKLDDMYDLIEHEVKAKNDVEETKDIITDNLFKAKDMNYTLQTEIEYVRENYYINESDAQSVRQFENEIQSLISVYDDILKEMSKSAVRYSEVQDNLQYLEDHVTVINDKQEKLQNHLIQLREDEAEAEDNLLRVQSKKEEVYRRLLASNLTSVPERFIIMKNEIDHEVRDVNEQFSERPIHVKQLKDKVSKIVIQMNTFEDEANDVLVNAVYAEKLIQYGNRYRKDYSNVDKSLNEAERLFKNNRYKRAIEIAEQALESVEPGVTKHIEEEVIKQ</sequence>
<accession>A6U2I4</accession>
<gene>
    <name evidence="1" type="primary">ezrA</name>
    <name type="ordered locus">SaurJH1_1808</name>
</gene>